<sequence>MRVVSSLFLPVLLAEVWLVSSFNLSSHSPEAPIRLVSQDYENQTWEEYEWADPRDDNEYWLRASQQLSNETSSFGFSLLRKISMRHDGNVIFSPFGLSVAMVNLMLGAKGETKVQVENGLNLQALSQAGPLILPALFKRVKETFSSNKKLGLTQGSFAFIHKDFEIKKTYFNLSTMYFDTEYVPTNFRNSSQARGLMNHYINKETEGKIPKLFDEINPETKLILVDYILFKGKWLTPFDPIFTEADTFHLDKYKAVKVPMMYREGNFASTFDKKFRCHILKLPYQGNATMLVVLMEKSGDHLALEDYLTTDLVEMWLQDMKTRKMEVFFPKFKLNQRYEMHELLKQVGIRRIFSTSADLSELSAVARNLQVSKVVQQSVLEVDERGTEVVSGTVSEITAYCMPPVIKVDRPFHFIIYEEMSQMLLFLGRVVNPTVL</sequence>
<comment type="function">
    <text evidence="1">Inhibits activity of the coagulation protease factor Xa in the presence of PROZ, calcium and phospholipids. Also inhibits factor XIa in the absence of cofactors (By similarity).</text>
</comment>
<comment type="subcellular location">
    <subcellularLocation>
        <location>Secreted</location>
    </subcellularLocation>
</comment>
<comment type="tissue specificity">
    <text evidence="4">Expressed by the liver and secreted in plasma.</text>
</comment>
<comment type="developmental stage">
    <text evidence="4">In regenerating livers, it showed maximal expression 48 hours after hepatectomy, expression remaining elevated up to 2 weeks after liver removal.</text>
</comment>
<comment type="PTM">
    <text evidence="2">Phosphorylated by FAM20C in the extracellular medium.</text>
</comment>
<comment type="miscellaneous">
    <text evidence="1">Heparin acts as an important cofactor, producing 20 to 100-fold accelerations of SERPINA10 reactions with factor Xa and factor XIa.</text>
</comment>
<comment type="similarity">
    <text evidence="5">Belongs to the serpin family.</text>
</comment>
<dbReference type="EMBL" id="U55765">
    <property type="protein sequence ID" value="AAC52624.1"/>
    <property type="molecule type" value="mRNA"/>
</dbReference>
<dbReference type="EMBL" id="BC088113">
    <property type="protein sequence ID" value="AAH88113.1"/>
    <property type="molecule type" value="mRNA"/>
</dbReference>
<dbReference type="PIR" id="JC4841">
    <property type="entry name" value="JC4841"/>
</dbReference>
<dbReference type="RefSeq" id="NP_598301.2">
    <property type="nucleotide sequence ID" value="NM_133617.2"/>
</dbReference>
<dbReference type="RefSeq" id="XP_003750275.1">
    <property type="nucleotide sequence ID" value="XM_003750227.3"/>
</dbReference>
<dbReference type="SMR" id="Q62975"/>
<dbReference type="FunCoup" id="Q62975">
    <property type="interactions" value="70"/>
</dbReference>
<dbReference type="STRING" id="10116.ENSRNOP00000064104"/>
<dbReference type="MEROPS" id="I04.005"/>
<dbReference type="GlyCosmos" id="Q62975">
    <property type="glycosylation" value="6 sites, No reported glycans"/>
</dbReference>
<dbReference type="GlyGen" id="Q62975">
    <property type="glycosylation" value="6 sites"/>
</dbReference>
<dbReference type="PhosphoSitePlus" id="Q62975"/>
<dbReference type="PaxDb" id="10116-ENSRNOP00000064104"/>
<dbReference type="Ensembl" id="ENSRNOT00000073709.2">
    <property type="protein sequence ID" value="ENSRNOP00000064104.1"/>
    <property type="gene ID" value="ENSRNOG00000050761.2"/>
</dbReference>
<dbReference type="GeneID" id="171154"/>
<dbReference type="KEGG" id="rno:171154"/>
<dbReference type="UCSC" id="RGD:621220">
    <property type="organism name" value="rat"/>
</dbReference>
<dbReference type="AGR" id="RGD:621220"/>
<dbReference type="CTD" id="51156"/>
<dbReference type="RGD" id="621220">
    <property type="gene designation" value="Serpina10"/>
</dbReference>
<dbReference type="eggNOG" id="KOG2392">
    <property type="taxonomic scope" value="Eukaryota"/>
</dbReference>
<dbReference type="GeneTree" id="ENSGT00940000159462"/>
<dbReference type="HOGENOM" id="CLU_023330_2_1_1"/>
<dbReference type="InParanoid" id="Q62975"/>
<dbReference type="OMA" id="METFHIN"/>
<dbReference type="OrthoDB" id="39743at9989"/>
<dbReference type="PhylomeDB" id="Q62975"/>
<dbReference type="TreeFam" id="TF343094"/>
<dbReference type="Reactome" id="R-RNO-381426">
    <property type="pathway name" value="Regulation of Insulin-like Growth Factor (IGF) transport and uptake by Insulin-like Growth Factor Binding Proteins (IGFBPs)"/>
</dbReference>
<dbReference type="Reactome" id="R-RNO-8957275">
    <property type="pathway name" value="Post-translational protein phosphorylation"/>
</dbReference>
<dbReference type="PRO" id="PR:Q62975"/>
<dbReference type="Proteomes" id="UP000002494">
    <property type="component" value="Chromosome 6"/>
</dbReference>
<dbReference type="Bgee" id="ENSRNOG00000048988">
    <property type="expression patterns" value="Expressed in liver and 10 other cell types or tissues"/>
</dbReference>
<dbReference type="GO" id="GO:0005615">
    <property type="term" value="C:extracellular space"/>
    <property type="evidence" value="ECO:0000318"/>
    <property type="project" value="GO_Central"/>
</dbReference>
<dbReference type="GO" id="GO:0008201">
    <property type="term" value="F:heparin binding"/>
    <property type="evidence" value="ECO:0007669"/>
    <property type="project" value="UniProtKB-KW"/>
</dbReference>
<dbReference type="GO" id="GO:0004867">
    <property type="term" value="F:serine-type endopeptidase inhibitor activity"/>
    <property type="evidence" value="ECO:0000318"/>
    <property type="project" value="GO_Central"/>
</dbReference>
<dbReference type="GO" id="GO:0007596">
    <property type="term" value="P:blood coagulation"/>
    <property type="evidence" value="ECO:0007669"/>
    <property type="project" value="UniProtKB-KW"/>
</dbReference>
<dbReference type="GO" id="GO:0097421">
    <property type="term" value="P:liver regeneration"/>
    <property type="evidence" value="ECO:0000270"/>
    <property type="project" value="RGD"/>
</dbReference>
<dbReference type="CDD" id="cd02055">
    <property type="entry name" value="serpinA10_PZI"/>
    <property type="match status" value="1"/>
</dbReference>
<dbReference type="FunFam" id="3.30.497.10:FF:000001">
    <property type="entry name" value="Serine protease inhibitor"/>
    <property type="match status" value="1"/>
</dbReference>
<dbReference type="FunFam" id="2.10.310.10:FF:000001">
    <property type="entry name" value="Serpin family A member 1"/>
    <property type="match status" value="1"/>
</dbReference>
<dbReference type="Gene3D" id="2.30.39.10">
    <property type="entry name" value="Alpha-1-antitrypsin, domain 1"/>
    <property type="match status" value="1"/>
</dbReference>
<dbReference type="Gene3D" id="3.30.497.10">
    <property type="entry name" value="Antithrombin, subunit I, domain 2"/>
    <property type="match status" value="1"/>
</dbReference>
<dbReference type="InterPro" id="IPR033835">
    <property type="entry name" value="PZI_serpin_dom"/>
</dbReference>
<dbReference type="InterPro" id="IPR023796">
    <property type="entry name" value="Serpin_dom"/>
</dbReference>
<dbReference type="InterPro" id="IPR000215">
    <property type="entry name" value="Serpin_fam"/>
</dbReference>
<dbReference type="InterPro" id="IPR036186">
    <property type="entry name" value="Serpin_sf"/>
</dbReference>
<dbReference type="InterPro" id="IPR042178">
    <property type="entry name" value="Serpin_sf_1"/>
</dbReference>
<dbReference type="InterPro" id="IPR042185">
    <property type="entry name" value="Serpin_sf_2"/>
</dbReference>
<dbReference type="PANTHER" id="PTHR11461:SF191">
    <property type="entry name" value="PROTEIN Z-DEPENDENT PROTEASE INHIBITOR"/>
    <property type="match status" value="1"/>
</dbReference>
<dbReference type="PANTHER" id="PTHR11461">
    <property type="entry name" value="SERINE PROTEASE INHIBITOR, SERPIN"/>
    <property type="match status" value="1"/>
</dbReference>
<dbReference type="Pfam" id="PF00079">
    <property type="entry name" value="Serpin"/>
    <property type="match status" value="1"/>
</dbReference>
<dbReference type="PRINTS" id="PR00780">
    <property type="entry name" value="LEUSERPINII"/>
</dbReference>
<dbReference type="SMART" id="SM00093">
    <property type="entry name" value="SERPIN"/>
    <property type="match status" value="1"/>
</dbReference>
<dbReference type="SUPFAM" id="SSF56574">
    <property type="entry name" value="Serpins"/>
    <property type="match status" value="1"/>
</dbReference>
<evidence type="ECO:0000250" key="1"/>
<evidence type="ECO:0000250" key="2">
    <source>
        <dbReference type="UniProtKB" id="Q9UK55"/>
    </source>
</evidence>
<evidence type="ECO:0000255" key="3"/>
<evidence type="ECO:0000269" key="4">
    <source>
    </source>
</evidence>
<evidence type="ECO:0000305" key="5"/>
<organism>
    <name type="scientific">Rattus norvegicus</name>
    <name type="common">Rat</name>
    <dbReference type="NCBI Taxonomy" id="10116"/>
    <lineage>
        <taxon>Eukaryota</taxon>
        <taxon>Metazoa</taxon>
        <taxon>Chordata</taxon>
        <taxon>Craniata</taxon>
        <taxon>Vertebrata</taxon>
        <taxon>Euteleostomi</taxon>
        <taxon>Mammalia</taxon>
        <taxon>Eutheria</taxon>
        <taxon>Euarchontoglires</taxon>
        <taxon>Glires</taxon>
        <taxon>Rodentia</taxon>
        <taxon>Myomorpha</taxon>
        <taxon>Muroidea</taxon>
        <taxon>Muridae</taxon>
        <taxon>Murinae</taxon>
        <taxon>Rattus</taxon>
    </lineage>
</organism>
<feature type="signal peptide" evidence="3">
    <location>
        <begin position="1"/>
        <end position="20"/>
    </location>
</feature>
<feature type="chain" id="PRO_0000032485" description="Protein Z-dependent protease inhibitor">
    <location>
        <begin position="21"/>
        <end position="436"/>
    </location>
</feature>
<feature type="region of interest" description="Heparin-binding" evidence="1">
    <location>
        <begin position="128"/>
        <end position="145"/>
    </location>
</feature>
<feature type="site" description="Essential for interaction with PROZ" evidence="1">
    <location>
        <position position="253"/>
    </location>
</feature>
<feature type="site" description="Essential for interaction with PROZ" evidence="1">
    <location>
        <position position="306"/>
    </location>
</feature>
<feature type="site" description="Reactive bond" evidence="1">
    <location>
        <begin position="400"/>
        <end position="401"/>
    </location>
</feature>
<feature type="glycosylation site" description="N-linked (GlcNAc...) asparagine" evidence="3">
    <location>
        <position position="23"/>
    </location>
</feature>
<feature type="glycosylation site" description="N-linked (GlcNAc...) asparagine" evidence="3">
    <location>
        <position position="42"/>
    </location>
</feature>
<feature type="glycosylation site" description="N-linked (GlcNAc...) asparagine" evidence="3">
    <location>
        <position position="69"/>
    </location>
</feature>
<feature type="glycosylation site" description="N-linked (GlcNAc...) asparagine" evidence="3">
    <location>
        <position position="172"/>
    </location>
</feature>
<feature type="glycosylation site" description="N-linked (GlcNAc...) asparagine" evidence="3">
    <location>
        <position position="189"/>
    </location>
</feature>
<feature type="glycosylation site" description="N-linked (GlcNAc...) asparagine" evidence="3">
    <location>
        <position position="287"/>
    </location>
</feature>
<feature type="sequence conflict" description="In Ref. 1; AAC52624." evidence="5" ref="1">
    <original>S</original>
    <variation>T</variation>
    <location>
        <position position="28"/>
    </location>
</feature>
<feature type="sequence conflict" description="In Ref. 1; AAC52624." evidence="5" ref="1">
    <original>Q</original>
    <variation>R</variation>
    <location>
        <position position="422"/>
    </location>
</feature>
<keyword id="KW-0094">Blood coagulation</keyword>
<keyword id="KW-0325">Glycoprotein</keyword>
<keyword id="KW-0356">Hemostasis</keyword>
<keyword id="KW-0358">Heparin-binding</keyword>
<keyword id="KW-0646">Protease inhibitor</keyword>
<keyword id="KW-1185">Reference proteome</keyword>
<keyword id="KW-0964">Secreted</keyword>
<keyword id="KW-0722">Serine protease inhibitor</keyword>
<keyword id="KW-0732">Signal</keyword>
<reference key="1">
    <citation type="journal article" date="1996" name="Biochem. Biophys. Res. Commun.">
        <title>cDNA cloning of rasp-1, a novel gene encoding a plasma protein associated with liver regeneration.</title>
        <authorList>
            <person name="New L."/>
            <person name="Liu K."/>
            <person name="Kamali V."/>
            <person name="Plowman G."/>
            <person name="Naughton B.A."/>
            <person name="Purchio A.F."/>
        </authorList>
    </citation>
    <scope>NUCLEOTIDE SEQUENCE [MRNA]</scope>
    <scope>TISSUE SPECIFICITY</scope>
    <scope>DEVELOPMENTAL STAGE</scope>
    <source>
        <strain>Long Evans</strain>
        <tissue>Liver</tissue>
    </source>
</reference>
<reference key="2">
    <citation type="journal article" date="2004" name="Genome Res.">
        <title>The status, quality, and expansion of the NIH full-length cDNA project: the Mammalian Gene Collection (MGC).</title>
        <authorList>
            <consortium name="The MGC Project Team"/>
        </authorList>
    </citation>
    <scope>NUCLEOTIDE SEQUENCE [LARGE SCALE MRNA]</scope>
    <source>
        <tissue>Liver</tissue>
    </source>
</reference>
<protein>
    <recommendedName>
        <fullName>Protein Z-dependent protease inhibitor</fullName>
        <shortName>PZ-dependent protease inhibitor</shortName>
        <shortName>PZI</shortName>
    </recommendedName>
    <alternativeName>
        <fullName>Regeneration-associated serpin 1</fullName>
        <shortName>RASP-1</shortName>
    </alternativeName>
    <alternativeName>
        <fullName>Serpin A10</fullName>
    </alternativeName>
</protein>
<accession>Q62975</accession>
<accession>Q5M8C2</accession>
<name>ZPI_RAT</name>
<gene>
    <name type="primary">Serpina10</name>
    <name type="synonym">Rasp1</name>
    <name type="synonym">Zpi</name>
</gene>
<proteinExistence type="evidence at transcript level"/>